<keyword id="KW-0002">3D-structure</keyword>
<keyword id="KW-0040">ANK repeat</keyword>
<keyword id="KW-0966">Cell projection</keyword>
<keyword id="KW-0175">Coiled coil</keyword>
<keyword id="KW-0221">Differentiation</keyword>
<keyword id="KW-1185">Reference proteome</keyword>
<keyword id="KW-0677">Repeat</keyword>
<gene>
    <name evidence="10" type="primary">Anks4b</name>
    <name evidence="8" type="synonym">Harp</name>
</gene>
<evidence type="ECO:0000250" key="1">
    <source>
        <dbReference type="UniProtKB" id="Q8N8V4"/>
    </source>
</evidence>
<evidence type="ECO:0000255" key="2"/>
<evidence type="ECO:0000256" key="3">
    <source>
        <dbReference type="SAM" id="MobiDB-lite"/>
    </source>
</evidence>
<evidence type="ECO:0000269" key="4">
    <source>
    </source>
</evidence>
<evidence type="ECO:0000269" key="5">
    <source>
    </source>
</evidence>
<evidence type="ECO:0000269" key="6">
    <source>
    </source>
</evidence>
<evidence type="ECO:0000269" key="7">
    <source>
    </source>
</evidence>
<evidence type="ECO:0000303" key="8">
    <source>
    </source>
</evidence>
<evidence type="ECO:0000305" key="9"/>
<evidence type="ECO:0000312" key="10">
    <source>
        <dbReference type="MGI" id="MGI:1919324"/>
    </source>
</evidence>
<evidence type="ECO:0007829" key="11">
    <source>
        <dbReference type="PDB" id="5F3X"/>
    </source>
</evidence>
<evidence type="ECO:0007829" key="12">
    <source>
        <dbReference type="PDB" id="5F3Y"/>
    </source>
</evidence>
<comment type="function">
    <text evidence="1 5">As part of the intermicrovillar adhesion complex/IMAC plays a role in epithelial brush border differentiation, controlling microvilli organization and length. Plays a role in assembly of the complex (By similarity). May play a role in cellular response to endoplasmic reticulum stress (PubMed:22589549).</text>
</comment>
<comment type="subunit">
    <text evidence="1 4 5 6">Part of the IMAC/intermicrovillar adhesion complex/intermicrovillar tip-link complex composed of ANKS4B, MYO7B, USH1C, CDHR2 and CDHR5 (By similarity). Interacts with USH1C; the interaction is direct and is required for ANKS4B localization to the tip of microvilli (PubMed:15461667, PubMed:26812017). Interacts with MYO7B; the interaction is direct (PubMed:26812017). May interact with HSPA5 (PubMed:22589549).</text>
</comment>
<comment type="subcellular location">
    <subcellularLocation>
        <location evidence="7">Cell projection</location>
        <location evidence="7">Microvillus</location>
    </subcellularLocation>
    <text evidence="5 7">Localizes at the tip of microvilli (PubMed:26812018). May associate with endoplasmic reticulum membranes (PubMed:22589549).</text>
</comment>
<comment type="tissue specificity">
    <text evidence="4 7">Cochlea, kidney, lung, liver, pancreas, salivary gland and small intestine (at protein level). Expressed in kidney, small intestine, pancreas, liver and colon. Not detected in heart, spleen and brain.</text>
</comment>
<organism>
    <name type="scientific">Mus musculus</name>
    <name type="common">Mouse</name>
    <dbReference type="NCBI Taxonomy" id="10090"/>
    <lineage>
        <taxon>Eukaryota</taxon>
        <taxon>Metazoa</taxon>
        <taxon>Chordata</taxon>
        <taxon>Craniata</taxon>
        <taxon>Vertebrata</taxon>
        <taxon>Euteleostomi</taxon>
        <taxon>Mammalia</taxon>
        <taxon>Eutheria</taxon>
        <taxon>Euarchontoglires</taxon>
        <taxon>Glires</taxon>
        <taxon>Rodentia</taxon>
        <taxon>Myomorpha</taxon>
        <taxon>Muroidea</taxon>
        <taxon>Muridae</taxon>
        <taxon>Murinae</taxon>
        <taxon>Mus</taxon>
        <taxon>Mus</taxon>
    </lineage>
</organism>
<sequence>MSTRYHQAASDSYLELLKEATKRDLNLSDEDGMTPTLLAAYHGNLEALEIICSRGGDPDKCDIWGNTPLHYAASNGHTHCISFLVNFGANIFALDNDLKSPLDAAASREQKECVALLDKAATVQNTMNPKRVTRLKEQALKNARKQMKECERLQERHQNKMARTYSKEDSGTISSSHSTLSRSFLSTTSAGRFGSLSKGIKDTFKIKSKKNKDTTEQLEKDGRSGQRPVMEVFREEEEDSFPKDFKEKLHFSVEEDDDVQHESILNRPGLGSIVFSRNRVLDFEDISDSKRELGFKMPSELFQRQGAAGTVEEEEEEEEEEEEEKREANGTAGDLPWDEEEVEWEEDAVDATPLEVFLQSQHLEEFLPIFMREQIDLEALLLCSDEDLQNIHMQLGPRKKVLSAIDKRKQVLQQPGQLVDTSL</sequence>
<protein>
    <recommendedName>
        <fullName evidence="9">Ankyrin repeat and SAM domain-containing protein 4B</fullName>
    </recommendedName>
    <alternativeName>
        <fullName evidence="8">Harmonin-interacting ankyrin repeat-containing protein</fullName>
        <shortName evidence="8">Harp</shortName>
    </alternativeName>
</protein>
<accession>Q8K3X6</accession>
<accession>Q148R3</accession>
<accession>Q9D8A5</accession>
<reference key="1">
    <citation type="journal article" date="2004" name="Genes Cells">
        <title>Harp (harmonin-interacting, ankyrin repeat-containing protein), a novel protein that interacts with harmonin in epithelial tissues.</title>
        <authorList>
            <person name="Johnston A.M."/>
            <person name="Naselli G."/>
            <person name="Niwa H."/>
            <person name="Brodnicki T."/>
            <person name="Harrison L.C."/>
            <person name="Gonez L.J."/>
        </authorList>
    </citation>
    <scope>NUCLEOTIDE SEQUENCE [MRNA]</scope>
    <scope>INTERACTION WITH USH1C</scope>
    <scope>MOTIF</scope>
    <scope>TISSUE SPECIFICITY</scope>
    <source>
        <strain>BALB/cJ</strain>
        <tissue>Kidney</tissue>
    </source>
</reference>
<reference key="2">
    <citation type="journal article" date="2005" name="Science">
        <title>The transcriptional landscape of the mammalian genome.</title>
        <authorList>
            <person name="Carninci P."/>
            <person name="Kasukawa T."/>
            <person name="Katayama S."/>
            <person name="Gough J."/>
            <person name="Frith M.C."/>
            <person name="Maeda N."/>
            <person name="Oyama R."/>
            <person name="Ravasi T."/>
            <person name="Lenhard B."/>
            <person name="Wells C."/>
            <person name="Kodzius R."/>
            <person name="Shimokawa K."/>
            <person name="Bajic V.B."/>
            <person name="Brenner S.E."/>
            <person name="Batalov S."/>
            <person name="Forrest A.R."/>
            <person name="Zavolan M."/>
            <person name="Davis M.J."/>
            <person name="Wilming L.G."/>
            <person name="Aidinis V."/>
            <person name="Allen J.E."/>
            <person name="Ambesi-Impiombato A."/>
            <person name="Apweiler R."/>
            <person name="Aturaliya R.N."/>
            <person name="Bailey T.L."/>
            <person name="Bansal M."/>
            <person name="Baxter L."/>
            <person name="Beisel K.W."/>
            <person name="Bersano T."/>
            <person name="Bono H."/>
            <person name="Chalk A.M."/>
            <person name="Chiu K.P."/>
            <person name="Choudhary V."/>
            <person name="Christoffels A."/>
            <person name="Clutterbuck D.R."/>
            <person name="Crowe M.L."/>
            <person name="Dalla E."/>
            <person name="Dalrymple B.P."/>
            <person name="de Bono B."/>
            <person name="Della Gatta G."/>
            <person name="di Bernardo D."/>
            <person name="Down T."/>
            <person name="Engstrom P."/>
            <person name="Fagiolini M."/>
            <person name="Faulkner G."/>
            <person name="Fletcher C.F."/>
            <person name="Fukushima T."/>
            <person name="Furuno M."/>
            <person name="Futaki S."/>
            <person name="Gariboldi M."/>
            <person name="Georgii-Hemming P."/>
            <person name="Gingeras T.R."/>
            <person name="Gojobori T."/>
            <person name="Green R.E."/>
            <person name="Gustincich S."/>
            <person name="Harbers M."/>
            <person name="Hayashi Y."/>
            <person name="Hensch T.K."/>
            <person name="Hirokawa N."/>
            <person name="Hill D."/>
            <person name="Huminiecki L."/>
            <person name="Iacono M."/>
            <person name="Ikeo K."/>
            <person name="Iwama A."/>
            <person name="Ishikawa T."/>
            <person name="Jakt M."/>
            <person name="Kanapin A."/>
            <person name="Katoh M."/>
            <person name="Kawasawa Y."/>
            <person name="Kelso J."/>
            <person name="Kitamura H."/>
            <person name="Kitano H."/>
            <person name="Kollias G."/>
            <person name="Krishnan S.P."/>
            <person name="Kruger A."/>
            <person name="Kummerfeld S.K."/>
            <person name="Kurochkin I.V."/>
            <person name="Lareau L.F."/>
            <person name="Lazarevic D."/>
            <person name="Lipovich L."/>
            <person name="Liu J."/>
            <person name="Liuni S."/>
            <person name="McWilliam S."/>
            <person name="Madan Babu M."/>
            <person name="Madera M."/>
            <person name="Marchionni L."/>
            <person name="Matsuda H."/>
            <person name="Matsuzawa S."/>
            <person name="Miki H."/>
            <person name="Mignone F."/>
            <person name="Miyake S."/>
            <person name="Morris K."/>
            <person name="Mottagui-Tabar S."/>
            <person name="Mulder N."/>
            <person name="Nakano N."/>
            <person name="Nakauchi H."/>
            <person name="Ng P."/>
            <person name="Nilsson R."/>
            <person name="Nishiguchi S."/>
            <person name="Nishikawa S."/>
            <person name="Nori F."/>
            <person name="Ohara O."/>
            <person name="Okazaki Y."/>
            <person name="Orlando V."/>
            <person name="Pang K.C."/>
            <person name="Pavan W.J."/>
            <person name="Pavesi G."/>
            <person name="Pesole G."/>
            <person name="Petrovsky N."/>
            <person name="Piazza S."/>
            <person name="Reed J."/>
            <person name="Reid J.F."/>
            <person name="Ring B.Z."/>
            <person name="Ringwald M."/>
            <person name="Rost B."/>
            <person name="Ruan Y."/>
            <person name="Salzberg S.L."/>
            <person name="Sandelin A."/>
            <person name="Schneider C."/>
            <person name="Schoenbach C."/>
            <person name="Sekiguchi K."/>
            <person name="Semple C.A."/>
            <person name="Seno S."/>
            <person name="Sessa L."/>
            <person name="Sheng Y."/>
            <person name="Shibata Y."/>
            <person name="Shimada H."/>
            <person name="Shimada K."/>
            <person name="Silva D."/>
            <person name="Sinclair B."/>
            <person name="Sperling S."/>
            <person name="Stupka E."/>
            <person name="Sugiura K."/>
            <person name="Sultana R."/>
            <person name="Takenaka Y."/>
            <person name="Taki K."/>
            <person name="Tammoja K."/>
            <person name="Tan S.L."/>
            <person name="Tang S."/>
            <person name="Taylor M.S."/>
            <person name="Tegner J."/>
            <person name="Teichmann S.A."/>
            <person name="Ueda H.R."/>
            <person name="van Nimwegen E."/>
            <person name="Verardo R."/>
            <person name="Wei C.L."/>
            <person name="Yagi K."/>
            <person name="Yamanishi H."/>
            <person name="Zabarovsky E."/>
            <person name="Zhu S."/>
            <person name="Zimmer A."/>
            <person name="Hide W."/>
            <person name="Bult C."/>
            <person name="Grimmond S.M."/>
            <person name="Teasdale R.D."/>
            <person name="Liu E.T."/>
            <person name="Brusic V."/>
            <person name="Quackenbush J."/>
            <person name="Wahlestedt C."/>
            <person name="Mattick J.S."/>
            <person name="Hume D.A."/>
            <person name="Kai C."/>
            <person name="Sasaki D."/>
            <person name="Tomaru Y."/>
            <person name="Fukuda S."/>
            <person name="Kanamori-Katayama M."/>
            <person name="Suzuki M."/>
            <person name="Aoki J."/>
            <person name="Arakawa T."/>
            <person name="Iida J."/>
            <person name="Imamura K."/>
            <person name="Itoh M."/>
            <person name="Kato T."/>
            <person name="Kawaji H."/>
            <person name="Kawagashira N."/>
            <person name="Kawashima T."/>
            <person name="Kojima M."/>
            <person name="Kondo S."/>
            <person name="Konno H."/>
            <person name="Nakano K."/>
            <person name="Ninomiya N."/>
            <person name="Nishio T."/>
            <person name="Okada M."/>
            <person name="Plessy C."/>
            <person name="Shibata K."/>
            <person name="Shiraki T."/>
            <person name="Suzuki S."/>
            <person name="Tagami M."/>
            <person name="Waki K."/>
            <person name="Watahiki A."/>
            <person name="Okamura-Oho Y."/>
            <person name="Suzuki H."/>
            <person name="Kawai J."/>
            <person name="Hayashizaki Y."/>
        </authorList>
    </citation>
    <scope>NUCLEOTIDE SEQUENCE [LARGE SCALE MRNA]</scope>
    <source>
        <strain>C57BL/6J</strain>
        <tissue>Small intestine</tissue>
    </source>
</reference>
<reference key="3">
    <citation type="journal article" date="2004" name="Genome Res.">
        <title>The status, quality, and expansion of the NIH full-length cDNA project: the Mammalian Gene Collection (MGC).</title>
        <authorList>
            <consortium name="The MGC Project Team"/>
        </authorList>
    </citation>
    <scope>NUCLEOTIDE SEQUENCE [LARGE SCALE MRNA]</scope>
</reference>
<reference key="4">
    <citation type="journal article" date="2007" name="Proc. Natl. Acad. Sci. U.S.A.">
        <title>Large-scale phosphorylation analysis of mouse liver.</title>
        <authorList>
            <person name="Villen J."/>
            <person name="Beausoleil S.A."/>
            <person name="Gerber S.A."/>
            <person name="Gygi S.P."/>
        </authorList>
    </citation>
    <scope>IDENTIFICATION BY MASS SPECTROMETRY [LARGE SCALE ANALYSIS]</scope>
    <source>
        <tissue>Liver</tissue>
    </source>
</reference>
<reference key="5">
    <citation type="journal article" date="2010" name="Cell">
        <title>A tissue-specific atlas of mouse protein phosphorylation and expression.</title>
        <authorList>
            <person name="Huttlin E.L."/>
            <person name="Jedrychowski M.P."/>
            <person name="Elias J.E."/>
            <person name="Goswami T."/>
            <person name="Rad R."/>
            <person name="Beausoleil S.A."/>
            <person name="Villen J."/>
            <person name="Haas W."/>
            <person name="Sowa M.E."/>
            <person name="Gygi S.P."/>
        </authorList>
    </citation>
    <scope>IDENTIFICATION BY MASS SPECTROMETRY [LARGE SCALE ANALYSIS]</scope>
    <source>
        <tissue>Kidney</tissue>
    </source>
</reference>
<reference key="6">
    <citation type="journal article" date="2012" name="J. Biol. Chem.">
        <title>Anks4b, a novel target of HNF4alpha protein, interacts with GRP78 protein and regulates endoplasmic reticulum stress-induced apoptosis in pancreatic beta-cells.</title>
        <authorList>
            <person name="Sato Y."/>
            <person name="Hatta M."/>
            <person name="Karim M.F."/>
            <person name="Sawa T."/>
            <person name="Wei F.Y."/>
            <person name="Sato S."/>
            <person name="Magnuson M.A."/>
            <person name="Gonzalez F.J."/>
            <person name="Tomizawa K."/>
            <person name="Akaike T."/>
            <person name="Yoshizawa T."/>
            <person name="Yamagata K."/>
        </authorList>
    </citation>
    <scope>FUNCTION</scope>
    <scope>INTERACTION WITH HSPA5</scope>
    <scope>SUBCELLULAR LOCATION</scope>
</reference>
<reference key="7">
    <citation type="journal article" date="2016" name="Dev. Cell">
        <title>ANKS4B is essential for intermicrovillar adhesion complex formation.</title>
        <authorList>
            <person name="Crawley S.W."/>
            <person name="Weck M.L."/>
            <person name="Grega-Larson N.E."/>
            <person name="Shifrin D.A. Jr."/>
            <person name="Tyska M.J."/>
        </authorList>
    </citation>
    <scope>SUBCELLULAR LOCATION</scope>
    <scope>TISSUE SPECIFICITY</scope>
</reference>
<reference key="8">
    <citation type="journal article" date="2016" name="Dev. Cell">
        <title>Mechanistic basis of organization of the Harmonin/USH1C-mediated brush border microvilli tip-link complex.</title>
        <authorList>
            <person name="Li J."/>
            <person name="He Y."/>
            <person name="Lu Q."/>
            <person name="Zhang M."/>
        </authorList>
    </citation>
    <scope>X-RAY CRYSTALLOGRAPHY (2.65 ANGSTROMS) OF 345-423 IN COMPLEX WITH USH1C</scope>
    <scope>X-RAY CRYSTALLOGRAPHY (3.4 ANGSTROMS) OF 253-352 IN COMPLEX WITH MYO7B</scope>
    <scope>REGION</scope>
</reference>
<name>ANS4B_MOUSE</name>
<feature type="chain" id="PRO_0000066997" description="Ankyrin repeat and SAM domain-containing protein 4B">
    <location>
        <begin position="1"/>
        <end position="423"/>
    </location>
</feature>
<feature type="repeat" description="ANK 1">
    <location>
        <begin position="31"/>
        <end position="60"/>
    </location>
</feature>
<feature type="repeat" description="ANK 2">
    <location>
        <begin position="64"/>
        <end position="93"/>
    </location>
</feature>
<feature type="repeat" description="ANK 3">
    <location>
        <begin position="97"/>
        <end position="126"/>
    </location>
</feature>
<feature type="domain" description="SAM">
    <location>
        <begin position="357"/>
        <end position="409"/>
    </location>
</feature>
<feature type="region of interest" description="Mediates localization to microvilli" evidence="1">
    <location>
        <begin position="1"/>
        <end position="251"/>
    </location>
</feature>
<feature type="region of interest" description="Disordered" evidence="3">
    <location>
        <begin position="158"/>
        <end position="181"/>
    </location>
</feature>
<feature type="region of interest" description="Disordered" evidence="3">
    <location>
        <begin position="207"/>
        <end position="227"/>
    </location>
</feature>
<feature type="region of interest" description="Mediates interaction with MYO7B" evidence="6">
    <location>
        <begin position="253"/>
        <end position="352"/>
    </location>
</feature>
<feature type="region of interest" description="Disordered" evidence="3">
    <location>
        <begin position="303"/>
        <end position="335"/>
    </location>
</feature>
<feature type="coiled-coil region" evidence="2">
    <location>
        <begin position="130"/>
        <end position="169"/>
    </location>
</feature>
<feature type="coiled-coil region" evidence="2">
    <location>
        <begin position="301"/>
        <end position="335"/>
    </location>
</feature>
<feature type="short sequence motif" description="PDZ-binding; mediates interaction with USH1C" evidence="4">
    <location>
        <begin position="421"/>
        <end position="423"/>
    </location>
</feature>
<feature type="compositionally biased region" description="Low complexity" evidence="3">
    <location>
        <begin position="171"/>
        <end position="181"/>
    </location>
</feature>
<feature type="compositionally biased region" description="Basic and acidic residues" evidence="3">
    <location>
        <begin position="207"/>
        <end position="224"/>
    </location>
</feature>
<feature type="compositionally biased region" description="Acidic residues" evidence="3">
    <location>
        <begin position="311"/>
        <end position="324"/>
    </location>
</feature>
<feature type="sequence conflict" description="In Ref. 2; BAB25545." evidence="9" ref="2">
    <original>E</original>
    <variation>G</variation>
    <location>
        <position position="324"/>
    </location>
</feature>
<feature type="sequence conflict" description="In Ref. 2; BAB25545." evidence="9" ref="2">
    <original>A</original>
    <variation>E</variation>
    <location>
        <position position="332"/>
    </location>
</feature>
<feature type="strand" evidence="12">
    <location>
        <begin position="265"/>
        <end position="267"/>
    </location>
</feature>
<feature type="turn" evidence="12">
    <location>
        <begin position="268"/>
        <end position="270"/>
    </location>
</feature>
<feature type="helix" evidence="11">
    <location>
        <begin position="353"/>
        <end position="360"/>
    </location>
</feature>
<feature type="helix" evidence="11">
    <location>
        <begin position="364"/>
        <end position="366"/>
    </location>
</feature>
<feature type="helix" evidence="11">
    <location>
        <begin position="367"/>
        <end position="372"/>
    </location>
</feature>
<feature type="helix" evidence="11">
    <location>
        <begin position="377"/>
        <end position="381"/>
    </location>
</feature>
<feature type="helix" evidence="11">
    <location>
        <begin position="385"/>
        <end position="390"/>
    </location>
</feature>
<feature type="helix" evidence="11">
    <location>
        <begin position="395"/>
        <end position="413"/>
    </location>
</feature>
<feature type="strand" evidence="11">
    <location>
        <begin position="421"/>
        <end position="423"/>
    </location>
</feature>
<proteinExistence type="evidence at protein level"/>
<dbReference type="EMBL" id="AF524030">
    <property type="protein sequence ID" value="AAM81375.1"/>
    <property type="molecule type" value="mRNA"/>
</dbReference>
<dbReference type="EMBL" id="AK008229">
    <property type="protein sequence ID" value="BAB25545.1"/>
    <property type="molecule type" value="mRNA"/>
</dbReference>
<dbReference type="EMBL" id="BC115784">
    <property type="protein sequence ID" value="AAI15785.1"/>
    <property type="molecule type" value="mRNA"/>
</dbReference>
<dbReference type="EMBL" id="BC118013">
    <property type="protein sequence ID" value="AAI18014.1"/>
    <property type="molecule type" value="mRNA"/>
</dbReference>
<dbReference type="CCDS" id="CCDS21793.1"/>
<dbReference type="RefSeq" id="NP_082361.2">
    <property type="nucleotide sequence ID" value="NM_028085.2"/>
</dbReference>
<dbReference type="PDB" id="5F3X">
    <property type="method" value="X-ray"/>
    <property type="resolution" value="2.65 A"/>
    <property type="chains" value="B/D=345-423"/>
</dbReference>
<dbReference type="PDB" id="5F3Y">
    <property type="method" value="X-ray"/>
    <property type="resolution" value="3.41 A"/>
    <property type="chains" value="B=252-352"/>
</dbReference>
<dbReference type="PDBsum" id="5F3X"/>
<dbReference type="PDBsum" id="5F3Y"/>
<dbReference type="SMR" id="Q8K3X6"/>
<dbReference type="BioGRID" id="215131">
    <property type="interactions" value="1"/>
</dbReference>
<dbReference type="FunCoup" id="Q8K3X6">
    <property type="interactions" value="52"/>
</dbReference>
<dbReference type="IntAct" id="Q8K3X6">
    <property type="interactions" value="1"/>
</dbReference>
<dbReference type="STRING" id="10090.ENSMUSP00000033201"/>
<dbReference type="iPTMnet" id="Q8K3X6"/>
<dbReference type="PhosphoSitePlus" id="Q8K3X6"/>
<dbReference type="SwissPalm" id="Q8K3X6"/>
<dbReference type="jPOST" id="Q8K3X6"/>
<dbReference type="PaxDb" id="10090-ENSMUSP00000033201"/>
<dbReference type="PeptideAtlas" id="Q8K3X6"/>
<dbReference type="ProteomicsDB" id="281773"/>
<dbReference type="Antibodypedia" id="50456">
    <property type="antibodies" value="67 antibodies from 15 providers"/>
</dbReference>
<dbReference type="DNASU" id="72074"/>
<dbReference type="Ensembl" id="ENSMUST00000033201.7">
    <property type="protein sequence ID" value="ENSMUSP00000033201.6"/>
    <property type="gene ID" value="ENSMUSG00000030909.7"/>
</dbReference>
<dbReference type="GeneID" id="72074"/>
<dbReference type="KEGG" id="mmu:72074"/>
<dbReference type="UCSC" id="uc009jmj.2">
    <property type="organism name" value="mouse"/>
</dbReference>
<dbReference type="AGR" id="MGI:1919324"/>
<dbReference type="CTD" id="257629"/>
<dbReference type="MGI" id="MGI:1919324">
    <property type="gene designation" value="Anks4b"/>
</dbReference>
<dbReference type="VEuPathDB" id="HostDB:ENSMUSG00000030909"/>
<dbReference type="eggNOG" id="KOG0504">
    <property type="taxonomic scope" value="Eukaryota"/>
</dbReference>
<dbReference type="GeneTree" id="ENSGT00390000017548"/>
<dbReference type="HOGENOM" id="CLU_028071_1_0_1"/>
<dbReference type="InParanoid" id="Q8K3X6"/>
<dbReference type="OMA" id="TQRNDQE"/>
<dbReference type="OrthoDB" id="76949at2759"/>
<dbReference type="PhylomeDB" id="Q8K3X6"/>
<dbReference type="TreeFam" id="TF324946"/>
<dbReference type="BioGRID-ORCS" id="72074">
    <property type="hits" value="1 hit in 77 CRISPR screens"/>
</dbReference>
<dbReference type="CD-CODE" id="F1DB9E1E">
    <property type="entry name" value="Signaling cluster"/>
</dbReference>
<dbReference type="EvolutionaryTrace" id="Q8K3X6"/>
<dbReference type="PRO" id="PR:Q8K3X6"/>
<dbReference type="Proteomes" id="UP000000589">
    <property type="component" value="Chromosome 7"/>
</dbReference>
<dbReference type="RNAct" id="Q8K3X6">
    <property type="molecule type" value="protein"/>
</dbReference>
<dbReference type="Bgee" id="ENSMUSG00000030909">
    <property type="expression patterns" value="Expressed in jejunum and 31 other cell types or tissues"/>
</dbReference>
<dbReference type="GO" id="GO:0005903">
    <property type="term" value="C:brush border"/>
    <property type="evidence" value="ECO:0000314"/>
    <property type="project" value="UniProtKB"/>
</dbReference>
<dbReference type="GO" id="GO:0005789">
    <property type="term" value="C:endoplasmic reticulum membrane"/>
    <property type="evidence" value="ECO:0000314"/>
    <property type="project" value="MGI"/>
</dbReference>
<dbReference type="GO" id="GO:0005902">
    <property type="term" value="C:microvillus"/>
    <property type="evidence" value="ECO:0000314"/>
    <property type="project" value="UniProtKB"/>
</dbReference>
<dbReference type="GO" id="GO:0005886">
    <property type="term" value="C:plasma membrane"/>
    <property type="evidence" value="ECO:0000314"/>
    <property type="project" value="MGI"/>
</dbReference>
<dbReference type="GO" id="GO:1904970">
    <property type="term" value="P:brush border assembly"/>
    <property type="evidence" value="ECO:0000250"/>
    <property type="project" value="UniProtKB"/>
</dbReference>
<dbReference type="GO" id="GO:0030154">
    <property type="term" value="P:cell differentiation"/>
    <property type="evidence" value="ECO:0007669"/>
    <property type="project" value="UniProtKB-KW"/>
</dbReference>
<dbReference type="GO" id="GO:1904106">
    <property type="term" value="P:protein localization to microvillus"/>
    <property type="evidence" value="ECO:0000250"/>
    <property type="project" value="UniProtKB"/>
</dbReference>
<dbReference type="GO" id="GO:0065003">
    <property type="term" value="P:protein-containing complex assembly"/>
    <property type="evidence" value="ECO:0000250"/>
    <property type="project" value="UniProtKB"/>
</dbReference>
<dbReference type="GO" id="GO:0034976">
    <property type="term" value="P:response to endoplasmic reticulum stress"/>
    <property type="evidence" value="ECO:0000315"/>
    <property type="project" value="MGI"/>
</dbReference>
<dbReference type="CDD" id="cd21802">
    <property type="entry name" value="CEN_ANKS4B"/>
    <property type="match status" value="1"/>
</dbReference>
<dbReference type="CDD" id="cd09587">
    <property type="entry name" value="SAM_HARP"/>
    <property type="match status" value="1"/>
</dbReference>
<dbReference type="FunFam" id="1.10.150.50:FF:000034">
    <property type="entry name" value="ankyrin repeat and SAM domain-containing protein 4B"/>
    <property type="match status" value="1"/>
</dbReference>
<dbReference type="FunFam" id="1.25.40.20:FF:000074">
    <property type="entry name" value="Usher syndrome type-1G protein isoform X1"/>
    <property type="match status" value="1"/>
</dbReference>
<dbReference type="Gene3D" id="1.25.40.20">
    <property type="entry name" value="Ankyrin repeat-containing domain"/>
    <property type="match status" value="1"/>
</dbReference>
<dbReference type="Gene3D" id="1.10.150.50">
    <property type="entry name" value="Transcription Factor, Ets-1"/>
    <property type="match status" value="1"/>
</dbReference>
<dbReference type="InterPro" id="IPR037601">
    <property type="entry name" value="ANKS4B_SAM"/>
</dbReference>
<dbReference type="InterPro" id="IPR002110">
    <property type="entry name" value="Ankyrin_rpt"/>
</dbReference>
<dbReference type="InterPro" id="IPR036770">
    <property type="entry name" value="Ankyrin_rpt-contain_sf"/>
</dbReference>
<dbReference type="InterPro" id="IPR001660">
    <property type="entry name" value="SAM"/>
</dbReference>
<dbReference type="InterPro" id="IPR013761">
    <property type="entry name" value="SAM/pointed_sf"/>
</dbReference>
<dbReference type="PANTHER" id="PTHR24161">
    <property type="entry name" value="ANK_REP_REGION DOMAIN-CONTAINING PROTEIN-RELATED"/>
    <property type="match status" value="1"/>
</dbReference>
<dbReference type="PANTHER" id="PTHR24161:SF20">
    <property type="entry name" value="ANKYRIN REPEAT AND SAM DOMAIN-CONTAINING PROTEIN 4B"/>
    <property type="match status" value="1"/>
</dbReference>
<dbReference type="Pfam" id="PF12796">
    <property type="entry name" value="Ank_2"/>
    <property type="match status" value="1"/>
</dbReference>
<dbReference type="Pfam" id="PF00536">
    <property type="entry name" value="SAM_1"/>
    <property type="match status" value="1"/>
</dbReference>
<dbReference type="SMART" id="SM00248">
    <property type="entry name" value="ANK"/>
    <property type="match status" value="3"/>
</dbReference>
<dbReference type="SMART" id="SM00454">
    <property type="entry name" value="SAM"/>
    <property type="match status" value="1"/>
</dbReference>
<dbReference type="SUPFAM" id="SSF48403">
    <property type="entry name" value="Ankyrin repeat"/>
    <property type="match status" value="1"/>
</dbReference>
<dbReference type="SUPFAM" id="SSF47769">
    <property type="entry name" value="SAM/Pointed domain"/>
    <property type="match status" value="1"/>
</dbReference>
<dbReference type="PROSITE" id="PS50297">
    <property type="entry name" value="ANK_REP_REGION"/>
    <property type="match status" value="1"/>
</dbReference>
<dbReference type="PROSITE" id="PS50088">
    <property type="entry name" value="ANK_REPEAT"/>
    <property type="match status" value="2"/>
</dbReference>